<comment type="function">
    <text evidence="1">Catalyzes the reversible interconversion of serine and glycine with tetrahydrofolate (THF) serving as the one-carbon carrier. This reaction serves as the major source of one-carbon groups required for the biosynthesis of purines, thymidylate, methionine, and other important biomolecules. Also exhibits THF-independent aldolase activity toward beta-hydroxyamino acids, producing glycine and aldehydes, via a retro-aldol mechanism.</text>
</comment>
<comment type="catalytic activity">
    <reaction evidence="1">
        <text>(6R)-5,10-methylene-5,6,7,8-tetrahydrofolate + glycine + H2O = (6S)-5,6,7,8-tetrahydrofolate + L-serine</text>
        <dbReference type="Rhea" id="RHEA:15481"/>
        <dbReference type="ChEBI" id="CHEBI:15377"/>
        <dbReference type="ChEBI" id="CHEBI:15636"/>
        <dbReference type="ChEBI" id="CHEBI:33384"/>
        <dbReference type="ChEBI" id="CHEBI:57305"/>
        <dbReference type="ChEBI" id="CHEBI:57453"/>
        <dbReference type="EC" id="2.1.2.1"/>
    </reaction>
</comment>
<comment type="cofactor">
    <cofactor evidence="1">
        <name>pyridoxal 5'-phosphate</name>
        <dbReference type="ChEBI" id="CHEBI:597326"/>
    </cofactor>
</comment>
<comment type="pathway">
    <text evidence="1">One-carbon metabolism; tetrahydrofolate interconversion.</text>
</comment>
<comment type="pathway">
    <text evidence="1">Amino-acid biosynthesis; glycine biosynthesis; glycine from L-serine: step 1/1.</text>
</comment>
<comment type="subunit">
    <text evidence="1">Homodimer.</text>
</comment>
<comment type="subcellular location">
    <subcellularLocation>
        <location evidence="1">Cytoplasm</location>
    </subcellularLocation>
</comment>
<comment type="similarity">
    <text evidence="1">Belongs to the SHMT family.</text>
</comment>
<dbReference type="EC" id="2.1.2.1" evidence="1"/>
<dbReference type="EMBL" id="CP000058">
    <property type="protein sequence ID" value="AAZ37110.1"/>
    <property type="molecule type" value="Genomic_DNA"/>
</dbReference>
<dbReference type="SMR" id="Q48CP3"/>
<dbReference type="KEGG" id="psp:PSPPH_4750"/>
<dbReference type="eggNOG" id="COG0112">
    <property type="taxonomic scope" value="Bacteria"/>
</dbReference>
<dbReference type="HOGENOM" id="CLU_022477_2_1_6"/>
<dbReference type="UniPathway" id="UPA00193"/>
<dbReference type="UniPathway" id="UPA00288">
    <property type="reaction ID" value="UER01023"/>
</dbReference>
<dbReference type="Proteomes" id="UP000000551">
    <property type="component" value="Chromosome"/>
</dbReference>
<dbReference type="GO" id="GO:0005829">
    <property type="term" value="C:cytosol"/>
    <property type="evidence" value="ECO:0007669"/>
    <property type="project" value="TreeGrafter"/>
</dbReference>
<dbReference type="GO" id="GO:0004372">
    <property type="term" value="F:glycine hydroxymethyltransferase activity"/>
    <property type="evidence" value="ECO:0007669"/>
    <property type="project" value="UniProtKB-UniRule"/>
</dbReference>
<dbReference type="GO" id="GO:0030170">
    <property type="term" value="F:pyridoxal phosphate binding"/>
    <property type="evidence" value="ECO:0007669"/>
    <property type="project" value="UniProtKB-UniRule"/>
</dbReference>
<dbReference type="GO" id="GO:0019264">
    <property type="term" value="P:glycine biosynthetic process from serine"/>
    <property type="evidence" value="ECO:0007669"/>
    <property type="project" value="UniProtKB-UniRule"/>
</dbReference>
<dbReference type="GO" id="GO:0035999">
    <property type="term" value="P:tetrahydrofolate interconversion"/>
    <property type="evidence" value="ECO:0007669"/>
    <property type="project" value="UniProtKB-UniRule"/>
</dbReference>
<dbReference type="CDD" id="cd00378">
    <property type="entry name" value="SHMT"/>
    <property type="match status" value="1"/>
</dbReference>
<dbReference type="FunFam" id="3.40.640.10:FF:000001">
    <property type="entry name" value="Serine hydroxymethyltransferase"/>
    <property type="match status" value="1"/>
</dbReference>
<dbReference type="FunFam" id="3.90.1150.10:FF:000003">
    <property type="entry name" value="Serine hydroxymethyltransferase"/>
    <property type="match status" value="1"/>
</dbReference>
<dbReference type="Gene3D" id="3.90.1150.10">
    <property type="entry name" value="Aspartate Aminotransferase, domain 1"/>
    <property type="match status" value="1"/>
</dbReference>
<dbReference type="Gene3D" id="3.40.640.10">
    <property type="entry name" value="Type I PLP-dependent aspartate aminotransferase-like (Major domain)"/>
    <property type="match status" value="1"/>
</dbReference>
<dbReference type="HAMAP" id="MF_00051">
    <property type="entry name" value="SHMT"/>
    <property type="match status" value="1"/>
</dbReference>
<dbReference type="InterPro" id="IPR015424">
    <property type="entry name" value="PyrdxlP-dep_Trfase"/>
</dbReference>
<dbReference type="InterPro" id="IPR015421">
    <property type="entry name" value="PyrdxlP-dep_Trfase_major"/>
</dbReference>
<dbReference type="InterPro" id="IPR015422">
    <property type="entry name" value="PyrdxlP-dep_Trfase_small"/>
</dbReference>
<dbReference type="InterPro" id="IPR001085">
    <property type="entry name" value="Ser_HO-MeTrfase"/>
</dbReference>
<dbReference type="InterPro" id="IPR049943">
    <property type="entry name" value="Ser_HO-MeTrfase-like"/>
</dbReference>
<dbReference type="InterPro" id="IPR019798">
    <property type="entry name" value="Ser_HO-MeTrfase_PLP_BS"/>
</dbReference>
<dbReference type="InterPro" id="IPR039429">
    <property type="entry name" value="SHMT-like_dom"/>
</dbReference>
<dbReference type="NCBIfam" id="NF000586">
    <property type="entry name" value="PRK00011.1"/>
    <property type="match status" value="1"/>
</dbReference>
<dbReference type="PANTHER" id="PTHR11680">
    <property type="entry name" value="SERINE HYDROXYMETHYLTRANSFERASE"/>
    <property type="match status" value="1"/>
</dbReference>
<dbReference type="PANTHER" id="PTHR11680:SF50">
    <property type="entry name" value="SERINE HYDROXYMETHYLTRANSFERASE"/>
    <property type="match status" value="1"/>
</dbReference>
<dbReference type="Pfam" id="PF00464">
    <property type="entry name" value="SHMT"/>
    <property type="match status" value="1"/>
</dbReference>
<dbReference type="PIRSF" id="PIRSF000412">
    <property type="entry name" value="SHMT"/>
    <property type="match status" value="1"/>
</dbReference>
<dbReference type="SUPFAM" id="SSF53383">
    <property type="entry name" value="PLP-dependent transferases"/>
    <property type="match status" value="1"/>
</dbReference>
<dbReference type="PROSITE" id="PS00096">
    <property type="entry name" value="SHMT"/>
    <property type="match status" value="1"/>
</dbReference>
<proteinExistence type="inferred from homology"/>
<reference key="1">
    <citation type="journal article" date="2005" name="J. Bacteriol.">
        <title>Whole-genome sequence analysis of Pseudomonas syringae pv. phaseolicola 1448A reveals divergence among pathovars in genes involved in virulence and transposition.</title>
        <authorList>
            <person name="Joardar V."/>
            <person name="Lindeberg M."/>
            <person name="Jackson R.W."/>
            <person name="Selengut J."/>
            <person name="Dodson R."/>
            <person name="Brinkac L.M."/>
            <person name="Daugherty S.C."/>
            <person name="DeBoy R.T."/>
            <person name="Durkin A.S."/>
            <person name="Gwinn Giglio M."/>
            <person name="Madupu R."/>
            <person name="Nelson W.C."/>
            <person name="Rosovitz M.J."/>
            <person name="Sullivan S.A."/>
            <person name="Crabtree J."/>
            <person name="Creasy T."/>
            <person name="Davidsen T.M."/>
            <person name="Haft D.H."/>
            <person name="Zafar N."/>
            <person name="Zhou L."/>
            <person name="Halpin R."/>
            <person name="Holley T."/>
            <person name="Khouri H.M."/>
            <person name="Feldblyum T.V."/>
            <person name="White O."/>
            <person name="Fraser C.M."/>
            <person name="Chatterjee A.K."/>
            <person name="Cartinhour S."/>
            <person name="Schneider D."/>
            <person name="Mansfield J.W."/>
            <person name="Collmer A."/>
            <person name="Buell R."/>
        </authorList>
    </citation>
    <scope>NUCLEOTIDE SEQUENCE [LARGE SCALE GENOMIC DNA]</scope>
    <source>
        <strain>1448A / Race 6</strain>
    </source>
</reference>
<sequence>MFSKQDQIQGYDDALLSAMNAEEQRQEDHIELIASENYTSKRVMQAQGSGLTNKYAEGYPGKRYYGGCEHVDKVEQLAIERAKQLFGADYANVQPHSGSQANAAVYLALLQAGDTVLGMSLAHGGHLTHGAKVSFSGKLYNAVQYGIDTTTGLIDYDEVERIAVECQPKMIIAGFSAYSKTLDFPRFREIADKVGAYLFVDMAHVAGLVAAGLYPNPLPYADVVTTTTHKTLRGPRGGLILAKANEELEKKFNSAVFPGGQGGPLMHVIAAKAVCFKEAMEPGFKAYQQQVIDNAQAMAQVFIDRGFDVVSGGTDNHLFLVSLIRQGLTGKDADAALGRAHITVNKNSVPNDPQSPFVTSGLRIGTPAVTTRGFKVTQCVELAGWICDILDNLGDADVEANVASQVAALCADFPVYR</sequence>
<gene>
    <name evidence="1" type="primary">glyA2</name>
    <name type="ordered locus">PSPPH_4750</name>
</gene>
<accession>Q48CP3</accession>
<protein>
    <recommendedName>
        <fullName evidence="1">Serine hydroxymethyltransferase 2</fullName>
        <shortName evidence="1">SHMT 2</shortName>
        <shortName evidence="1">Serine methylase 2</shortName>
        <ecNumber evidence="1">2.1.2.1</ecNumber>
    </recommendedName>
</protein>
<name>GLYA2_PSE14</name>
<feature type="chain" id="PRO_0000235008" description="Serine hydroxymethyltransferase 2">
    <location>
        <begin position="1"/>
        <end position="417"/>
    </location>
</feature>
<feature type="binding site" evidence="1">
    <location>
        <position position="121"/>
    </location>
    <ligand>
        <name>(6S)-5,6,7,8-tetrahydrofolate</name>
        <dbReference type="ChEBI" id="CHEBI:57453"/>
    </ligand>
</feature>
<feature type="binding site" evidence="1">
    <location>
        <begin position="125"/>
        <end position="127"/>
    </location>
    <ligand>
        <name>(6S)-5,6,7,8-tetrahydrofolate</name>
        <dbReference type="ChEBI" id="CHEBI:57453"/>
    </ligand>
</feature>
<feature type="binding site" evidence="1">
    <location>
        <begin position="355"/>
        <end position="357"/>
    </location>
    <ligand>
        <name>(6S)-5,6,7,8-tetrahydrofolate</name>
        <dbReference type="ChEBI" id="CHEBI:57453"/>
    </ligand>
</feature>
<feature type="site" description="Plays an important role in substrate specificity" evidence="1">
    <location>
        <position position="229"/>
    </location>
</feature>
<feature type="modified residue" description="N6-(pyridoxal phosphate)lysine" evidence="1">
    <location>
        <position position="230"/>
    </location>
</feature>
<keyword id="KW-0028">Amino-acid biosynthesis</keyword>
<keyword id="KW-0963">Cytoplasm</keyword>
<keyword id="KW-0554">One-carbon metabolism</keyword>
<keyword id="KW-0663">Pyridoxal phosphate</keyword>
<keyword id="KW-0808">Transferase</keyword>
<organism>
    <name type="scientific">Pseudomonas savastanoi pv. phaseolicola (strain 1448A / Race 6)</name>
    <name type="common">Pseudomonas syringae pv. phaseolicola (strain 1448A / Race 6)</name>
    <dbReference type="NCBI Taxonomy" id="264730"/>
    <lineage>
        <taxon>Bacteria</taxon>
        <taxon>Pseudomonadati</taxon>
        <taxon>Pseudomonadota</taxon>
        <taxon>Gammaproteobacteria</taxon>
        <taxon>Pseudomonadales</taxon>
        <taxon>Pseudomonadaceae</taxon>
        <taxon>Pseudomonas</taxon>
    </lineage>
</organism>
<evidence type="ECO:0000255" key="1">
    <source>
        <dbReference type="HAMAP-Rule" id="MF_00051"/>
    </source>
</evidence>